<organism>
    <name type="scientific">Parafrankia sp. (strain EAN1pec)</name>
    <dbReference type="NCBI Taxonomy" id="298653"/>
    <lineage>
        <taxon>Bacteria</taxon>
        <taxon>Bacillati</taxon>
        <taxon>Actinomycetota</taxon>
        <taxon>Actinomycetes</taxon>
        <taxon>Frankiales</taxon>
        <taxon>Frankiaceae</taxon>
        <taxon>Parafrankia</taxon>
    </lineage>
</organism>
<name>HIS4_PARS2</name>
<comment type="catalytic activity">
    <reaction evidence="1">
        <text>1-(5-phospho-beta-D-ribosyl)-5-[(5-phospho-beta-D-ribosylamino)methylideneamino]imidazole-4-carboxamide = 5-[(5-phospho-1-deoxy-D-ribulos-1-ylimino)methylamino]-1-(5-phospho-beta-D-ribosyl)imidazole-4-carboxamide</text>
        <dbReference type="Rhea" id="RHEA:15469"/>
        <dbReference type="ChEBI" id="CHEBI:58435"/>
        <dbReference type="ChEBI" id="CHEBI:58525"/>
        <dbReference type="EC" id="5.3.1.16"/>
    </reaction>
</comment>
<comment type="pathway">
    <text evidence="1">Amino-acid biosynthesis; L-histidine biosynthesis; L-histidine from 5-phospho-alpha-D-ribose 1-diphosphate: step 4/9.</text>
</comment>
<comment type="subcellular location">
    <subcellularLocation>
        <location evidence="1">Cytoplasm</location>
    </subcellularLocation>
</comment>
<comment type="similarity">
    <text evidence="1">Belongs to the HisA/HisF family.</text>
</comment>
<sequence>MTLTLLPAVDVADGLAVRLVQGEAGTETSYGDPREAALAWQRDGAEWIHLVDLDAAFGRGSNRDLIAEVVRSVDVAVELSGGIRDDDSLDAALATGAARVNIGTAALEDPEWVRKAIDRVGDRIAVGLDVRGTTLAARGWTREGGELYEVLARLDADGCARYVLTDVRRDGTLTGPNVELLRAVTAATTRPVVASGGVSSLEDLRVIATVPGVEGAIVGKALYAGAFTLPEALAVAAEVPAAGAP</sequence>
<proteinExistence type="inferred from homology"/>
<dbReference type="EC" id="5.3.1.16" evidence="1"/>
<dbReference type="EMBL" id="CP000820">
    <property type="protein sequence ID" value="ABW11360.1"/>
    <property type="molecule type" value="Genomic_DNA"/>
</dbReference>
<dbReference type="RefSeq" id="WP_020459528.1">
    <property type="nucleotide sequence ID" value="NC_009921.1"/>
</dbReference>
<dbReference type="SMR" id="A8LGR0"/>
<dbReference type="STRING" id="298653.Franean1_1923"/>
<dbReference type="KEGG" id="fre:Franean1_1923"/>
<dbReference type="eggNOG" id="COG0106">
    <property type="taxonomic scope" value="Bacteria"/>
</dbReference>
<dbReference type="HOGENOM" id="CLU_048577_1_1_11"/>
<dbReference type="UniPathway" id="UPA00031">
    <property type="reaction ID" value="UER00009"/>
</dbReference>
<dbReference type="GO" id="GO:0005737">
    <property type="term" value="C:cytoplasm"/>
    <property type="evidence" value="ECO:0007669"/>
    <property type="project" value="UniProtKB-SubCell"/>
</dbReference>
<dbReference type="GO" id="GO:0003949">
    <property type="term" value="F:1-(5-phosphoribosyl)-5-[(5-phosphoribosylamino)methylideneamino]imidazole-4-carboxamide isomerase activity"/>
    <property type="evidence" value="ECO:0007669"/>
    <property type="project" value="UniProtKB-UniRule"/>
</dbReference>
<dbReference type="GO" id="GO:0004640">
    <property type="term" value="F:phosphoribosylanthranilate isomerase activity"/>
    <property type="evidence" value="ECO:0007669"/>
    <property type="project" value="InterPro"/>
</dbReference>
<dbReference type="GO" id="GO:0000105">
    <property type="term" value="P:L-histidine biosynthetic process"/>
    <property type="evidence" value="ECO:0007669"/>
    <property type="project" value="UniProtKB-UniRule"/>
</dbReference>
<dbReference type="GO" id="GO:0000162">
    <property type="term" value="P:L-tryptophan biosynthetic process"/>
    <property type="evidence" value="ECO:0007669"/>
    <property type="project" value="InterPro"/>
</dbReference>
<dbReference type="CDD" id="cd04732">
    <property type="entry name" value="HisA"/>
    <property type="match status" value="1"/>
</dbReference>
<dbReference type="FunFam" id="3.20.20.70:FF:000009">
    <property type="entry name" value="1-(5-phosphoribosyl)-5-[(5-phosphoribosylamino)methylideneamino] imidazole-4-carboxamide isomerase"/>
    <property type="match status" value="1"/>
</dbReference>
<dbReference type="Gene3D" id="3.20.20.70">
    <property type="entry name" value="Aldolase class I"/>
    <property type="match status" value="1"/>
</dbReference>
<dbReference type="HAMAP" id="MF_01014">
    <property type="entry name" value="HisA"/>
    <property type="match status" value="1"/>
</dbReference>
<dbReference type="InterPro" id="IPR013785">
    <property type="entry name" value="Aldolase_TIM"/>
</dbReference>
<dbReference type="InterPro" id="IPR006062">
    <property type="entry name" value="His_biosynth"/>
</dbReference>
<dbReference type="InterPro" id="IPR010188">
    <property type="entry name" value="HisA/PriA_Actinobacteria"/>
</dbReference>
<dbReference type="InterPro" id="IPR044524">
    <property type="entry name" value="Isoase_HisA-like"/>
</dbReference>
<dbReference type="InterPro" id="IPR023016">
    <property type="entry name" value="Isoase_HisA-like_bact"/>
</dbReference>
<dbReference type="InterPro" id="IPR011060">
    <property type="entry name" value="RibuloseP-bd_barrel"/>
</dbReference>
<dbReference type="NCBIfam" id="TIGR01919">
    <property type="entry name" value="hisA-trpF"/>
    <property type="match status" value="1"/>
</dbReference>
<dbReference type="PANTHER" id="PTHR43090">
    <property type="entry name" value="1-(5-PHOSPHORIBOSYL)-5-[(5-PHOSPHORIBOSYLAMINO)METHYLIDENEAMINO] IMIDAZOLE-4-CARBOXAMIDE ISOMERASE"/>
    <property type="match status" value="1"/>
</dbReference>
<dbReference type="PANTHER" id="PTHR43090:SF2">
    <property type="entry name" value="1-(5-PHOSPHORIBOSYL)-5-[(5-PHOSPHORIBOSYLAMINO)METHYLIDENEAMINO] IMIDAZOLE-4-CARBOXAMIDE ISOMERASE"/>
    <property type="match status" value="1"/>
</dbReference>
<dbReference type="Pfam" id="PF00977">
    <property type="entry name" value="His_biosynth"/>
    <property type="match status" value="1"/>
</dbReference>
<dbReference type="SUPFAM" id="SSF51366">
    <property type="entry name" value="Ribulose-phoshate binding barrel"/>
    <property type="match status" value="1"/>
</dbReference>
<accession>A8LGR0</accession>
<reference key="1">
    <citation type="journal article" date="2007" name="Genome Res.">
        <title>Genome characteristics of facultatively symbiotic Frankia sp. strains reflect host range and host plant biogeography.</title>
        <authorList>
            <person name="Normand P."/>
            <person name="Lapierre P."/>
            <person name="Tisa L.S."/>
            <person name="Gogarten J.P."/>
            <person name="Alloisio N."/>
            <person name="Bagnarol E."/>
            <person name="Bassi C.A."/>
            <person name="Berry A.M."/>
            <person name="Bickhart D.M."/>
            <person name="Choisne N."/>
            <person name="Couloux A."/>
            <person name="Cournoyer B."/>
            <person name="Cruveiller S."/>
            <person name="Daubin V."/>
            <person name="Demange N."/>
            <person name="Francino M.P."/>
            <person name="Goltsman E."/>
            <person name="Huang Y."/>
            <person name="Kopp O.R."/>
            <person name="Labarre L."/>
            <person name="Lapidus A."/>
            <person name="Lavire C."/>
            <person name="Marechal J."/>
            <person name="Martinez M."/>
            <person name="Mastronunzio J.E."/>
            <person name="Mullin B.C."/>
            <person name="Niemann J."/>
            <person name="Pujic P."/>
            <person name="Rawnsley T."/>
            <person name="Rouy Z."/>
            <person name="Schenowitz C."/>
            <person name="Sellstedt A."/>
            <person name="Tavares F."/>
            <person name="Tomkins J.P."/>
            <person name="Vallenet D."/>
            <person name="Valverde C."/>
            <person name="Wall L.G."/>
            <person name="Wang Y."/>
            <person name="Medigue C."/>
            <person name="Benson D.R."/>
        </authorList>
    </citation>
    <scope>NUCLEOTIDE SEQUENCE [LARGE SCALE GENOMIC DNA]</scope>
    <source>
        <strain>EAN1pec</strain>
    </source>
</reference>
<evidence type="ECO:0000255" key="1">
    <source>
        <dbReference type="HAMAP-Rule" id="MF_01014"/>
    </source>
</evidence>
<gene>
    <name evidence="1" type="primary">hisA</name>
    <name type="ordered locus">Franean1_1923</name>
</gene>
<feature type="chain" id="PRO_1000135120" description="1-(5-phosphoribosyl)-5-[(5-phosphoribosylamino)methylideneamino] imidazole-4-carboxamide isomerase">
    <location>
        <begin position="1"/>
        <end position="245"/>
    </location>
</feature>
<feature type="active site" description="Proton acceptor" evidence="1">
    <location>
        <position position="10"/>
    </location>
</feature>
<feature type="active site" description="Proton donor" evidence="1">
    <location>
        <position position="129"/>
    </location>
</feature>
<protein>
    <recommendedName>
        <fullName evidence="1">1-(5-phosphoribosyl)-5-[(5-phosphoribosylamino)methylideneamino] imidazole-4-carboxamide isomerase</fullName>
        <ecNumber evidence="1">5.3.1.16</ecNumber>
    </recommendedName>
    <alternativeName>
        <fullName evidence="1">Phosphoribosylformimino-5-aminoimidazole carboxamide ribotide isomerase</fullName>
    </alternativeName>
</protein>
<keyword id="KW-0028">Amino-acid biosynthesis</keyword>
<keyword id="KW-0963">Cytoplasm</keyword>
<keyword id="KW-0368">Histidine biosynthesis</keyword>
<keyword id="KW-0413">Isomerase</keyword>